<evidence type="ECO:0000255" key="1">
    <source>
        <dbReference type="HAMAP-Rule" id="MF_01219"/>
    </source>
</evidence>
<name>PYRR_BACCQ</name>
<protein>
    <recommendedName>
        <fullName evidence="1">Bifunctional protein PyrR</fullName>
    </recommendedName>
    <domain>
        <recommendedName>
            <fullName evidence="1">Pyrimidine operon regulatory protein</fullName>
        </recommendedName>
    </domain>
    <domain>
        <recommendedName>
            <fullName evidence="1">Uracil phosphoribosyltransferase</fullName>
            <shortName evidence="1">UPRTase</shortName>
            <ecNumber evidence="1">2.4.2.9</ecNumber>
        </recommendedName>
    </domain>
</protein>
<organism>
    <name type="scientific">Bacillus cereus (strain Q1)</name>
    <dbReference type="NCBI Taxonomy" id="361100"/>
    <lineage>
        <taxon>Bacteria</taxon>
        <taxon>Bacillati</taxon>
        <taxon>Bacillota</taxon>
        <taxon>Bacilli</taxon>
        <taxon>Bacillales</taxon>
        <taxon>Bacillaceae</taxon>
        <taxon>Bacillus</taxon>
        <taxon>Bacillus cereus group</taxon>
    </lineage>
</organism>
<dbReference type="EC" id="2.4.2.9" evidence="1"/>
<dbReference type="EMBL" id="CP000227">
    <property type="protein sequence ID" value="ACM14105.1"/>
    <property type="molecule type" value="Genomic_DNA"/>
</dbReference>
<dbReference type="SMR" id="B9IVW8"/>
<dbReference type="KEGG" id="bcq:BCQ_3677"/>
<dbReference type="HOGENOM" id="CLU_094234_2_1_9"/>
<dbReference type="Proteomes" id="UP000000441">
    <property type="component" value="Chromosome"/>
</dbReference>
<dbReference type="GO" id="GO:0003723">
    <property type="term" value="F:RNA binding"/>
    <property type="evidence" value="ECO:0007669"/>
    <property type="project" value="UniProtKB-UniRule"/>
</dbReference>
<dbReference type="GO" id="GO:0004845">
    <property type="term" value="F:uracil phosphoribosyltransferase activity"/>
    <property type="evidence" value="ECO:0007669"/>
    <property type="project" value="UniProtKB-UniRule"/>
</dbReference>
<dbReference type="GO" id="GO:0006353">
    <property type="term" value="P:DNA-templated transcription termination"/>
    <property type="evidence" value="ECO:0007669"/>
    <property type="project" value="UniProtKB-UniRule"/>
</dbReference>
<dbReference type="CDD" id="cd06223">
    <property type="entry name" value="PRTases_typeI"/>
    <property type="match status" value="1"/>
</dbReference>
<dbReference type="FunFam" id="3.40.50.2020:FF:000020">
    <property type="entry name" value="Bifunctional protein PyrR"/>
    <property type="match status" value="1"/>
</dbReference>
<dbReference type="Gene3D" id="3.40.50.2020">
    <property type="match status" value="1"/>
</dbReference>
<dbReference type="HAMAP" id="MF_01219">
    <property type="entry name" value="PyrR"/>
    <property type="match status" value="1"/>
</dbReference>
<dbReference type="InterPro" id="IPR000836">
    <property type="entry name" value="PRibTrfase_dom"/>
</dbReference>
<dbReference type="InterPro" id="IPR029057">
    <property type="entry name" value="PRTase-like"/>
</dbReference>
<dbReference type="InterPro" id="IPR023050">
    <property type="entry name" value="PyrR"/>
</dbReference>
<dbReference type="InterPro" id="IPR050137">
    <property type="entry name" value="PyrR_bifunctional"/>
</dbReference>
<dbReference type="NCBIfam" id="NF003545">
    <property type="entry name" value="PRK05205.1-1"/>
    <property type="match status" value="1"/>
</dbReference>
<dbReference type="NCBIfam" id="NF003547">
    <property type="entry name" value="PRK05205.1-3"/>
    <property type="match status" value="1"/>
</dbReference>
<dbReference type="NCBIfam" id="NF003548">
    <property type="entry name" value="PRK05205.1-4"/>
    <property type="match status" value="1"/>
</dbReference>
<dbReference type="NCBIfam" id="NF003549">
    <property type="entry name" value="PRK05205.1-5"/>
    <property type="match status" value="1"/>
</dbReference>
<dbReference type="PANTHER" id="PTHR11608">
    <property type="entry name" value="BIFUNCTIONAL PROTEIN PYRR"/>
    <property type="match status" value="1"/>
</dbReference>
<dbReference type="PANTHER" id="PTHR11608:SF0">
    <property type="entry name" value="BIFUNCTIONAL PROTEIN PYRR"/>
    <property type="match status" value="1"/>
</dbReference>
<dbReference type="Pfam" id="PF00156">
    <property type="entry name" value="Pribosyltran"/>
    <property type="match status" value="1"/>
</dbReference>
<dbReference type="SUPFAM" id="SSF53271">
    <property type="entry name" value="PRTase-like"/>
    <property type="match status" value="1"/>
</dbReference>
<reference key="1">
    <citation type="journal article" date="2009" name="J. Bacteriol.">
        <title>Complete genome sequence of the extremophilic Bacillus cereus strain Q1 with industrial applications.</title>
        <authorList>
            <person name="Xiong Z."/>
            <person name="Jiang Y."/>
            <person name="Qi D."/>
            <person name="Lu H."/>
            <person name="Yang F."/>
            <person name="Yang J."/>
            <person name="Chen L."/>
            <person name="Sun L."/>
            <person name="Xu X."/>
            <person name="Xue Y."/>
            <person name="Zhu Y."/>
            <person name="Jin Q."/>
        </authorList>
    </citation>
    <scope>NUCLEOTIDE SEQUENCE [LARGE SCALE GENOMIC DNA]</scope>
    <source>
        <strain>Q1</strain>
    </source>
</reference>
<accession>B9IVW8</accession>
<proteinExistence type="inferred from homology"/>
<sequence>MQEKAVVLDDQMIRRALTRISHEIVERNKGVDNCVLVGIKTRGIFIAQRLAERIGQIEGKEMEVGELDITLYRDDLTLQSKNKEPLVKGSDIPVDITKKKVILVDDVLYTGRTVRAAMDALMDLGRPSQIQLAVLVDRGHRELPIRADYVGKNIPTSSEERIEVDLQETDQQDRVSIYDK</sequence>
<feature type="chain" id="PRO_1000164844" description="Bifunctional protein PyrR">
    <location>
        <begin position="1"/>
        <end position="180"/>
    </location>
</feature>
<feature type="short sequence motif" description="PRPP-binding" evidence="1">
    <location>
        <begin position="101"/>
        <end position="113"/>
    </location>
</feature>
<gene>
    <name evidence="1" type="primary">pyrR</name>
    <name type="ordered locus">BCQ_3677</name>
</gene>
<keyword id="KW-0328">Glycosyltransferase</keyword>
<keyword id="KW-0694">RNA-binding</keyword>
<keyword id="KW-0804">Transcription</keyword>
<keyword id="KW-0805">Transcription regulation</keyword>
<keyword id="KW-0806">Transcription termination</keyword>
<keyword id="KW-0808">Transferase</keyword>
<comment type="function">
    <text evidence="1">Regulates transcriptional attenuation of the pyrimidine nucleotide (pyr) operon by binding in a uridine-dependent manner to specific sites on pyr mRNA. This disrupts an antiterminator hairpin in the RNA and favors formation of a downstream transcription terminator, leading to a reduced expression of downstream genes.</text>
</comment>
<comment type="function">
    <text evidence="1">Also displays a weak uracil phosphoribosyltransferase activity which is not physiologically significant.</text>
</comment>
<comment type="catalytic activity">
    <reaction evidence="1">
        <text>UMP + diphosphate = 5-phospho-alpha-D-ribose 1-diphosphate + uracil</text>
        <dbReference type="Rhea" id="RHEA:13017"/>
        <dbReference type="ChEBI" id="CHEBI:17568"/>
        <dbReference type="ChEBI" id="CHEBI:33019"/>
        <dbReference type="ChEBI" id="CHEBI:57865"/>
        <dbReference type="ChEBI" id="CHEBI:58017"/>
        <dbReference type="EC" id="2.4.2.9"/>
    </reaction>
</comment>
<comment type="subunit">
    <text evidence="1">Homodimer and homohexamer; in equilibrium.</text>
</comment>
<comment type="similarity">
    <text evidence="1">Belongs to the purine/pyrimidine phosphoribosyltransferase family. PyrR subfamily.</text>
</comment>